<sequence length="958" mass="85096">GPMGPSGPRGIPGPPGAPGPQGFGPPGEPGEPGASGPMGPRGPPGPPGKNGDDGEAGKPGRPGERGPPGPQGARGIPGTAGIPGMKGHRGFSGIDGAKGDAGPAGPKGEPGSPGENGAPGQMGPRGIPGERGRPGAPGPAGARGNDGATGAAGPPGPTGPAGPPGFPGAVGAKGEAGPQGARGSEGPQGVRGEPGPPGPAGAAGPAGNPGAGANGAPGIAGAPGFPGARGPSGPQGPSGPPGPKGNSGEPGAPGSKKGEPGPTGVQGPPGPAGEEGKRGARGEPGPTGIPGPPGERGGPGSRGFPGSDGVAGPKGPAGERGAPGPAGPKGSPGEAGRPGEAGIPGAKGITGSPGSPGPDGKTGPPGPAGQDGRPGPPGPPGARGQAGVMGFPGPKGAAGEPGKAGERGVPGPPGAVGPAGKDGEAGAQGPPGPAGPAGERGEPGPAGSPGFQGIPGPAGPPGESGKPGEVPGDIGAPGPSGARGERGFPGERGVQGPPGPAGPRGAGAAGIPGPKGDRGDAGPKGADGAPGKDGVRGITGPIGPPGPAGAPGDKGESGPSGPAGPTGARGAPGDRGEPGPPGPAGFAGPPGADGQPGAKGEPGDAGAKGDAGPAGPAGPTGPPGPIGNVGAPGPKGARGSAGPPGATGFPGAAGRVGPPGPAGNAGPPGPPGPVGKEGGKGPRGETGPAGRPGEVGPPGPPGPAGEKGSPGADGPAGAPGTPGPQGIAGQRGVVGIPGQRGERGFPGIPGPSGEPGKQGPSGASGERGPPGPVGPPGIAGPPGESGREGAPGAEGSPGRGDRGETGPAGPPGAPGAPGAPGPVGPAGKSGDRGETGPAGPAGPIGPVGARGPTGPQGPRGDKGETGEQGDRGIKGHRGFSGIQGPTGPPGAPGEQGPSGASGPAGPRGPPGSAGAPGKDGINGIPGPIGPPGPRGRTGDAGPVGPPGPPGPPGPPGPP</sequence>
<gene>
    <name evidence="1" type="primary">COL1A1</name>
</gene>
<dbReference type="GO" id="GO:0005581">
    <property type="term" value="C:collagen trimer"/>
    <property type="evidence" value="ECO:0007669"/>
    <property type="project" value="UniProtKB-KW"/>
</dbReference>
<dbReference type="GO" id="GO:0005576">
    <property type="term" value="C:extracellular region"/>
    <property type="evidence" value="ECO:0007669"/>
    <property type="project" value="UniProtKB-SubCell"/>
</dbReference>
<dbReference type="InterPro" id="IPR008160">
    <property type="entry name" value="Collagen"/>
</dbReference>
<dbReference type="InterPro" id="IPR050938">
    <property type="entry name" value="Collagen_Structural_Proteins"/>
</dbReference>
<dbReference type="PANTHER" id="PTHR37456:SF6">
    <property type="entry name" value="COLLAGEN ALPHA-1(XXIII) CHAIN-LIKE ISOFORM X2"/>
    <property type="match status" value="1"/>
</dbReference>
<dbReference type="PANTHER" id="PTHR37456">
    <property type="entry name" value="SI:CH211-266K2.1"/>
    <property type="match status" value="1"/>
</dbReference>
<dbReference type="Pfam" id="PF01391">
    <property type="entry name" value="Collagen"/>
    <property type="match status" value="11"/>
</dbReference>
<evidence type="ECO:0000250" key="1">
    <source>
        <dbReference type="UniProtKB" id="P02452"/>
    </source>
</evidence>
<evidence type="ECO:0000250" key="2">
    <source>
        <dbReference type="UniProtKB" id="P02454"/>
    </source>
</evidence>
<evidence type="ECO:0000256" key="3">
    <source>
        <dbReference type="SAM" id="MobiDB-lite"/>
    </source>
</evidence>
<evidence type="ECO:0000269" key="4">
    <source>
    </source>
</evidence>
<evidence type="ECO:0000303" key="5">
    <source>
    </source>
</evidence>
<evidence type="ECO:0000305" key="6"/>
<evidence type="ECO:0000305" key="7">
    <source>
    </source>
</evidence>
<comment type="function">
    <text evidence="6">Type I collagen is a member of group I collagen (fibrillar forming collagen).</text>
</comment>
<comment type="subunit">
    <text evidence="6">Trimers of one alpha 2(I) and two alpha 1(I) chains.</text>
</comment>
<comment type="subcellular location">
    <subcellularLocation>
        <location>Secreted</location>
    </subcellularLocation>
    <subcellularLocation>
        <location>Secreted</location>
        <location>Extracellular space</location>
    </subcellularLocation>
    <subcellularLocation>
        <location evidence="6">Secreted</location>
        <location evidence="6">Extracellular space</location>
        <location evidence="6">Extracellular matrix</location>
    </subcellularLocation>
</comment>
<comment type="tissue specificity">
    <text evidence="6">Forms the fibrils of tendon, ligaments and bones. In bones, the fibrils are mineralized with calcium hydroxyapatite.</text>
</comment>
<comment type="PTM">
    <text evidence="6">Prolines at the third position of the tripeptide repeating unit (G-X-Y) are hydroxylated in some or all of the chains.</text>
</comment>
<comment type="miscellaneous">
    <text evidence="7">These protein fragments were extracted from fossils. The tryptic peptides required multiple purification steps in order to eliminate contaminants and to increase the concentration of peptidic material.</text>
</comment>
<comment type="similarity">
    <text evidence="6">Belongs to the fibrillar collagen family.</text>
</comment>
<name>CO1A1_MACSX</name>
<protein>
    <recommendedName>
        <fullName evidence="5">Collagen alpha-1(I) chain</fullName>
    </recommendedName>
    <alternativeName>
        <fullName evidence="1">Alpha-1 type I collagen</fullName>
    </alternativeName>
</protein>
<accession>C0HJP5</accession>
<reference evidence="6" key="1">
    <citation type="journal article" date="2015" name="Nature">
        <title>Ancient proteins resolve the evolutionary history of Darwin's South American ungulates.</title>
        <authorList>
            <person name="Welker F."/>
            <person name="Collins M.J."/>
            <person name="Thomas J.A."/>
            <person name="Wadsley M."/>
            <person name="Brace S."/>
            <person name="Cappellini E."/>
            <person name="Turvey S.T."/>
            <person name="Reguero M."/>
            <person name="Gelfo J.N."/>
            <person name="Kramarz A."/>
            <person name="Burger J."/>
            <person name="Thomas-Oates J."/>
            <person name="Ashford D.A."/>
            <person name="Ashton P.D."/>
            <person name="Rowsell K."/>
            <person name="Porter D.M."/>
            <person name="Kessler B."/>
            <person name="Fischer R."/>
            <person name="Baessmann C."/>
            <person name="Kaspar S."/>
            <person name="Olsen J.V."/>
            <person name="Kiley P."/>
            <person name="Elliott J.A."/>
            <person name="Kelstrup C.D."/>
            <person name="Mullin V."/>
            <person name="Hofreiter M."/>
            <person name="Willerslev E."/>
            <person name="Hublin J.J."/>
            <person name="Orlando L."/>
            <person name="Barnes I."/>
            <person name="MacPhee R.D."/>
        </authorList>
    </citation>
    <scope>PROTEIN SEQUENCE</scope>
    <scope>IDENTIFICATION BY MASS SPECTROMETRY</scope>
    <source>
        <tissue evidence="5">Bone</tissue>
    </source>
</reference>
<organism evidence="5">
    <name type="scientific">Macrauchenia sp</name>
    <dbReference type="NCBI Taxonomy" id="1563127"/>
    <lineage>
        <taxon>Eukaryota</taxon>
        <taxon>Metazoa</taxon>
        <taxon>Chordata</taxon>
        <taxon>Craniata</taxon>
        <taxon>Vertebrata</taxon>
        <taxon>Euteleostomi</taxon>
        <taxon>Mammalia</taxon>
        <taxon>Eutheria</taxon>
        <taxon>Litopterna</taxon>
        <taxon>Macraucheniidae</taxon>
        <taxon>Macrauchenia</taxon>
    </lineage>
</organism>
<feature type="chain" id="PRO_0000433495" description="Collagen alpha-1(I) chain" evidence="4">
    <location>
        <begin position="1"/>
        <end position="958"/>
    </location>
</feature>
<feature type="region of interest" description="Disordered" evidence="3">
    <location>
        <begin position="1"/>
        <end position="958"/>
    </location>
</feature>
<feature type="compositionally biased region" description="Basic and acidic residues" evidence="3">
    <location>
        <begin position="50"/>
        <end position="64"/>
    </location>
</feature>
<feature type="compositionally biased region" description="Low complexity" evidence="3">
    <location>
        <begin position="100"/>
        <end position="116"/>
    </location>
</feature>
<feature type="compositionally biased region" description="Low complexity" evidence="3">
    <location>
        <begin position="139"/>
        <end position="152"/>
    </location>
</feature>
<feature type="compositionally biased region" description="Pro residues" evidence="3">
    <location>
        <begin position="154"/>
        <end position="166"/>
    </location>
</feature>
<feature type="compositionally biased region" description="Low complexity" evidence="3">
    <location>
        <begin position="216"/>
        <end position="232"/>
    </location>
</feature>
<feature type="compositionally biased region" description="Gly residues" evidence="3">
    <location>
        <begin position="294"/>
        <end position="303"/>
    </location>
</feature>
<feature type="compositionally biased region" description="Low complexity" evidence="3">
    <location>
        <begin position="304"/>
        <end position="335"/>
    </location>
</feature>
<feature type="compositionally biased region" description="Low complexity" evidence="3">
    <location>
        <begin position="347"/>
        <end position="373"/>
    </location>
</feature>
<feature type="compositionally biased region" description="Low complexity" evidence="3">
    <location>
        <begin position="382"/>
        <end position="401"/>
    </location>
</feature>
<feature type="compositionally biased region" description="Low complexity" evidence="3">
    <location>
        <begin position="557"/>
        <end position="571"/>
    </location>
</feature>
<feature type="compositionally biased region" description="Low complexity" evidence="3">
    <location>
        <begin position="584"/>
        <end position="614"/>
    </location>
</feature>
<feature type="compositionally biased region" description="Low complexity" evidence="3">
    <location>
        <begin position="640"/>
        <end position="656"/>
    </location>
</feature>
<feature type="compositionally biased region" description="Low complexity" evidence="3">
    <location>
        <begin position="685"/>
        <end position="694"/>
    </location>
</feature>
<feature type="compositionally biased region" description="Low complexity" evidence="3">
    <location>
        <begin position="704"/>
        <end position="728"/>
    </location>
</feature>
<feature type="compositionally biased region" description="Pro residues" evidence="3">
    <location>
        <begin position="769"/>
        <end position="779"/>
    </location>
</feature>
<feature type="compositionally biased region" description="Pro residues" evidence="3">
    <location>
        <begin position="808"/>
        <end position="823"/>
    </location>
</feature>
<feature type="compositionally biased region" description="Basic and acidic residues" evidence="3">
    <location>
        <begin position="859"/>
        <end position="873"/>
    </location>
</feature>
<feature type="compositionally biased region" description="Low complexity" evidence="3">
    <location>
        <begin position="892"/>
        <end position="925"/>
    </location>
</feature>
<feature type="compositionally biased region" description="Pro residues" evidence="3">
    <location>
        <begin position="943"/>
        <end position="958"/>
    </location>
</feature>
<feature type="modified residue" description="Phosphoserine" evidence="2">
    <location>
        <position position="92"/>
    </location>
</feature>
<feature type="modified residue" description="Phosphoserine" evidence="2">
    <location>
        <position position="560"/>
    </location>
</feature>
<feature type="unsure residue" description="I or L" evidence="4">
    <location>
        <position position="11"/>
    </location>
</feature>
<feature type="unsure residue" description="I or L" evidence="4">
    <location>
        <position position="76"/>
    </location>
</feature>
<feature type="unsure residue" description="I or L" evidence="4">
    <location>
        <position position="82"/>
    </location>
</feature>
<feature type="unsure residue" description="I or L" evidence="4">
    <location>
        <position position="94"/>
    </location>
</feature>
<feature type="unsure residue" description="I or L" evidence="4">
    <location>
        <position position="127"/>
    </location>
</feature>
<feature type="unsure residue" description="I or L" evidence="4">
    <location>
        <position position="219"/>
    </location>
</feature>
<feature type="unsure residue" description="I or L" evidence="4">
    <location>
        <position position="289"/>
    </location>
</feature>
<feature type="unsure residue" description="I or L" evidence="4">
    <location>
        <position position="343"/>
    </location>
</feature>
<feature type="unsure residue" description="I or L" evidence="4">
    <location>
        <position position="349"/>
    </location>
</feature>
<feature type="unsure residue" description="I or L" evidence="4">
    <location>
        <position position="454"/>
    </location>
</feature>
<feature type="unsure residue" description="I or L" evidence="4">
    <location>
        <position position="474"/>
    </location>
</feature>
<feature type="unsure residue" description="I or L" evidence="4">
    <location>
        <position position="511"/>
    </location>
</feature>
<feature type="unsure residue" description="I or L" evidence="4">
    <location>
        <position position="538"/>
    </location>
</feature>
<feature type="unsure residue" description="I or L" evidence="4">
    <location>
        <position position="542"/>
    </location>
</feature>
<feature type="unsure residue" description="I or L" evidence="4">
    <location>
        <position position="626"/>
    </location>
</feature>
<feature type="unsure residue" description="I or L" evidence="4">
    <location>
        <position position="727"/>
    </location>
</feature>
<feature type="unsure residue" description="I or L" evidence="4">
    <location>
        <position position="736"/>
    </location>
</feature>
<feature type="unsure residue" description="I or L" evidence="4">
    <location>
        <position position="748"/>
    </location>
</feature>
<feature type="unsure residue" description="I or L" evidence="4">
    <location>
        <position position="778"/>
    </location>
</feature>
<feature type="unsure residue" description="I or L" evidence="4">
    <location>
        <position position="844"/>
    </location>
</feature>
<feature type="unsure residue" description="I or L" evidence="4">
    <location>
        <position position="873"/>
    </location>
</feature>
<feature type="unsure residue" description="I or L" evidence="4">
    <location>
        <position position="882"/>
    </location>
</feature>
<feature type="unsure residue" description="I or L" evidence="4">
    <location>
        <position position="921"/>
    </location>
</feature>
<feature type="unsure residue" description="I or L" evidence="4">
    <location>
        <position position="924"/>
    </location>
</feature>
<feature type="unsure residue" description="I or L" evidence="4">
    <location>
        <position position="928"/>
    </location>
</feature>
<feature type="non-consecutive residues" evidence="5">
    <location>
        <begin position="23"/>
        <end position="24"/>
    </location>
</feature>
<feature type="non-consecutive residues" evidence="5">
    <location>
        <begin position="211"/>
        <end position="212"/>
    </location>
</feature>
<feature type="non-consecutive residues" evidence="5">
    <location>
        <begin position="256"/>
        <end position="257"/>
    </location>
</feature>
<feature type="non-consecutive residues" evidence="5">
    <location>
        <begin position="469"/>
        <end position="470"/>
    </location>
</feature>
<feature type="non-consecutive residues" evidence="5">
    <location>
        <begin position="506"/>
        <end position="507"/>
    </location>
</feature>
<feature type="non-consecutive residues" evidence="5">
    <location>
        <begin position="799"/>
        <end position="800"/>
    </location>
</feature>
<proteinExistence type="evidence at protein level"/>
<keyword id="KW-0106">Calcium</keyword>
<keyword id="KW-0176">Collagen</keyword>
<keyword id="KW-0903">Direct protein sequencing</keyword>
<keyword id="KW-0952">Extinct organism protein</keyword>
<keyword id="KW-0272">Extracellular matrix</keyword>
<keyword id="KW-0379">Hydroxylation</keyword>
<keyword id="KW-0597">Phosphoprotein</keyword>
<keyword id="KW-0677">Repeat</keyword>
<keyword id="KW-0964">Secreted</keyword>